<name>Y2550_GEOSW</name>
<gene>
    <name type="ordered locus">GWCH70_2550</name>
</gene>
<keyword id="KW-0378">Hydrolase</keyword>
<keyword id="KW-0479">Metal-binding</keyword>
<keyword id="KW-0482">Metalloprotease</keyword>
<keyword id="KW-0645">Protease</keyword>
<keyword id="KW-0862">Zinc</keyword>
<protein>
    <recommendedName>
        <fullName>UPF0758 protein GWCH70_2550</fullName>
    </recommendedName>
</protein>
<organism>
    <name type="scientific">Geobacillus sp. (strain WCH70)</name>
    <dbReference type="NCBI Taxonomy" id="471223"/>
    <lineage>
        <taxon>Bacteria</taxon>
        <taxon>Bacillati</taxon>
        <taxon>Bacillota</taxon>
        <taxon>Bacilli</taxon>
        <taxon>Bacillales</taxon>
        <taxon>Anoxybacillaceae</taxon>
        <taxon>Geobacillus</taxon>
    </lineage>
</organism>
<accession>C5D5H7</accession>
<proteinExistence type="inferred from homology"/>
<feature type="chain" id="PRO_1000201876" description="UPF0758 protein GWCH70_2550">
    <location>
        <begin position="1"/>
        <end position="226"/>
    </location>
</feature>
<feature type="domain" description="MPN" evidence="1">
    <location>
        <begin position="104"/>
        <end position="226"/>
    </location>
</feature>
<feature type="short sequence motif" description="JAMM motif" evidence="1">
    <location>
        <begin position="175"/>
        <end position="188"/>
    </location>
</feature>
<feature type="binding site" evidence="1">
    <location>
        <position position="175"/>
    </location>
    <ligand>
        <name>Zn(2+)</name>
        <dbReference type="ChEBI" id="CHEBI:29105"/>
        <note>catalytic</note>
    </ligand>
</feature>
<feature type="binding site" evidence="1">
    <location>
        <position position="177"/>
    </location>
    <ligand>
        <name>Zn(2+)</name>
        <dbReference type="ChEBI" id="CHEBI:29105"/>
        <note>catalytic</note>
    </ligand>
</feature>
<feature type="binding site" evidence="1">
    <location>
        <position position="188"/>
    </location>
    <ligand>
        <name>Zn(2+)</name>
        <dbReference type="ChEBI" id="CHEBI:29105"/>
        <note>catalytic</note>
    </ligand>
</feature>
<reference key="1">
    <citation type="submission" date="2009-06" db="EMBL/GenBank/DDBJ databases">
        <title>Complete sequence of chromosome of Geopacillus sp. WCH70.</title>
        <authorList>
            <consortium name="US DOE Joint Genome Institute"/>
            <person name="Lucas S."/>
            <person name="Copeland A."/>
            <person name="Lapidus A."/>
            <person name="Glavina del Rio T."/>
            <person name="Dalin E."/>
            <person name="Tice H."/>
            <person name="Bruce D."/>
            <person name="Goodwin L."/>
            <person name="Pitluck S."/>
            <person name="Chertkov O."/>
            <person name="Brettin T."/>
            <person name="Detter J.C."/>
            <person name="Han C."/>
            <person name="Larimer F."/>
            <person name="Land M."/>
            <person name="Hauser L."/>
            <person name="Kyrpides N."/>
            <person name="Mikhailova N."/>
            <person name="Brumm P."/>
            <person name="Mead D.A."/>
            <person name="Richardson P."/>
        </authorList>
    </citation>
    <scope>NUCLEOTIDE SEQUENCE [LARGE SCALE GENOMIC DNA]</scope>
    <source>
        <strain>WCH70</strain>
    </source>
</reference>
<comment type="similarity">
    <text evidence="2">Belongs to the UPF0758 family.</text>
</comment>
<sequence>MTFMIRDVPKDARPRERLLSSGPESLADHELLAILLRTGTKEESVLQLAHRLLKHFEGLRLLKDATIEEITSIKGIGTTKAVQILAAIELGRRISRLSYNGRYVIRSPEDGAKYVMEDMRFLSQEHFVAIYLNTKNQVIHRKTIFIGSLNASIVHPREVFKEAIKRSAASIICVHNHPSGDPTPSREDIDVTKRLAECGRIIGIELLDHLIIGDQKFVSLKEKGYV</sequence>
<dbReference type="EMBL" id="CP001638">
    <property type="protein sequence ID" value="ACS25245.1"/>
    <property type="molecule type" value="Genomic_DNA"/>
</dbReference>
<dbReference type="SMR" id="C5D5H7"/>
<dbReference type="STRING" id="471223.GWCH70_2550"/>
<dbReference type="KEGG" id="gwc:GWCH70_2550"/>
<dbReference type="eggNOG" id="COG2003">
    <property type="taxonomic scope" value="Bacteria"/>
</dbReference>
<dbReference type="HOGENOM" id="CLU_073529_0_2_9"/>
<dbReference type="OrthoDB" id="9804482at2"/>
<dbReference type="GO" id="GO:0046872">
    <property type="term" value="F:metal ion binding"/>
    <property type="evidence" value="ECO:0007669"/>
    <property type="project" value="UniProtKB-KW"/>
</dbReference>
<dbReference type="GO" id="GO:0008237">
    <property type="term" value="F:metallopeptidase activity"/>
    <property type="evidence" value="ECO:0007669"/>
    <property type="project" value="UniProtKB-KW"/>
</dbReference>
<dbReference type="GO" id="GO:0006508">
    <property type="term" value="P:proteolysis"/>
    <property type="evidence" value="ECO:0007669"/>
    <property type="project" value="UniProtKB-KW"/>
</dbReference>
<dbReference type="CDD" id="cd08071">
    <property type="entry name" value="MPN_DUF2466"/>
    <property type="match status" value="1"/>
</dbReference>
<dbReference type="Gene3D" id="1.10.150.20">
    <property type="entry name" value="5' to 3' exonuclease, C-terminal subdomain"/>
    <property type="match status" value="1"/>
</dbReference>
<dbReference type="Gene3D" id="3.40.140.10">
    <property type="entry name" value="Cytidine Deaminase, domain 2"/>
    <property type="match status" value="1"/>
</dbReference>
<dbReference type="InterPro" id="IPR037518">
    <property type="entry name" value="MPN"/>
</dbReference>
<dbReference type="InterPro" id="IPR025657">
    <property type="entry name" value="RadC_JAB"/>
</dbReference>
<dbReference type="InterPro" id="IPR010994">
    <property type="entry name" value="RuvA_2-like"/>
</dbReference>
<dbReference type="InterPro" id="IPR001405">
    <property type="entry name" value="UPF0758"/>
</dbReference>
<dbReference type="InterPro" id="IPR020891">
    <property type="entry name" value="UPF0758_CS"/>
</dbReference>
<dbReference type="InterPro" id="IPR046778">
    <property type="entry name" value="UPF0758_N"/>
</dbReference>
<dbReference type="NCBIfam" id="NF000642">
    <property type="entry name" value="PRK00024.1"/>
    <property type="match status" value="1"/>
</dbReference>
<dbReference type="NCBIfam" id="TIGR00608">
    <property type="entry name" value="radc"/>
    <property type="match status" value="1"/>
</dbReference>
<dbReference type="PANTHER" id="PTHR30471">
    <property type="entry name" value="DNA REPAIR PROTEIN RADC"/>
    <property type="match status" value="1"/>
</dbReference>
<dbReference type="PANTHER" id="PTHR30471:SF3">
    <property type="entry name" value="UPF0758 PROTEIN YEES-RELATED"/>
    <property type="match status" value="1"/>
</dbReference>
<dbReference type="Pfam" id="PF04002">
    <property type="entry name" value="RadC"/>
    <property type="match status" value="1"/>
</dbReference>
<dbReference type="Pfam" id="PF20582">
    <property type="entry name" value="UPF0758_N"/>
    <property type="match status" value="1"/>
</dbReference>
<dbReference type="SUPFAM" id="SSF102712">
    <property type="entry name" value="JAB1/MPN domain"/>
    <property type="match status" value="1"/>
</dbReference>
<dbReference type="SUPFAM" id="SSF47781">
    <property type="entry name" value="RuvA domain 2-like"/>
    <property type="match status" value="1"/>
</dbReference>
<dbReference type="PROSITE" id="PS50249">
    <property type="entry name" value="MPN"/>
    <property type="match status" value="1"/>
</dbReference>
<dbReference type="PROSITE" id="PS01302">
    <property type="entry name" value="UPF0758"/>
    <property type="match status" value="1"/>
</dbReference>
<evidence type="ECO:0000255" key="1">
    <source>
        <dbReference type="PROSITE-ProRule" id="PRU01182"/>
    </source>
</evidence>
<evidence type="ECO:0000305" key="2"/>